<evidence type="ECO:0000250" key="1">
    <source>
        <dbReference type="UniProtKB" id="Q6GPB9"/>
    </source>
</evidence>
<evidence type="ECO:0000255" key="2"/>
<evidence type="ECO:0000256" key="3">
    <source>
        <dbReference type="SAM" id="MobiDB-lite"/>
    </source>
</evidence>
<evidence type="ECO:0000269" key="4">
    <source>
    </source>
</evidence>
<evidence type="ECO:0000303" key="5">
    <source>
    </source>
</evidence>
<evidence type="ECO:0000303" key="6">
    <source>
    </source>
</evidence>
<evidence type="ECO:0000305" key="7"/>
<evidence type="ECO:0000312" key="8">
    <source>
        <dbReference type="MGI" id="MGI:2385328"/>
    </source>
</evidence>
<dbReference type="EMBL" id="AK030997">
    <property type="protein sequence ID" value="BAC27209.1"/>
    <property type="molecule type" value="mRNA"/>
</dbReference>
<dbReference type="EMBL" id="AL844176">
    <property type="status" value="NOT_ANNOTATED_CDS"/>
    <property type="molecule type" value="Genomic_DNA"/>
</dbReference>
<dbReference type="EMBL" id="BC028975">
    <property type="protein sequence ID" value="AAH28975.1"/>
    <property type="molecule type" value="mRNA"/>
</dbReference>
<dbReference type="EMBL" id="BC034130">
    <property type="protein sequence ID" value="AAH34130.1"/>
    <property type="molecule type" value="mRNA"/>
</dbReference>
<dbReference type="CCDS" id="CCDS38824.3">
    <molecule id="E9PYY5-1"/>
</dbReference>
<dbReference type="RefSeq" id="NP_666366.4">
    <molecule id="E9PYY5-1"/>
    <property type="nucleotide sequence ID" value="NM_146254.5"/>
</dbReference>
<dbReference type="SMR" id="E9PYY5"/>
<dbReference type="FunCoup" id="E9PYY5">
    <property type="interactions" value="376"/>
</dbReference>
<dbReference type="STRING" id="10090.ENSMUSP00000102481"/>
<dbReference type="PhosphoSitePlus" id="E9PYY5"/>
<dbReference type="SwissPalm" id="E9PYY5"/>
<dbReference type="PaxDb" id="10090-ENSMUSP00000102481"/>
<dbReference type="ProteomicsDB" id="275211">
    <molecule id="E9PYY5-1"/>
</dbReference>
<dbReference type="ProteomicsDB" id="275212">
    <molecule id="E9PYY5-2"/>
</dbReference>
<dbReference type="ProteomicsDB" id="275213">
    <molecule id="E9PYY5-3"/>
</dbReference>
<dbReference type="ProteomicsDB" id="275214">
    <molecule id="E9PYY5-4"/>
</dbReference>
<dbReference type="Antibodypedia" id="51698">
    <property type="antibodies" value="17 antibodies from 8 providers"/>
</dbReference>
<dbReference type="DNASU" id="242584"/>
<dbReference type="Ensembl" id="ENSMUST00000106868.4">
    <molecule id="E9PYY5-1"/>
    <property type="protein sequence ID" value="ENSMUSP00000102481.4"/>
    <property type="gene ID" value="ENSMUSG00000035126.21"/>
</dbReference>
<dbReference type="Ensembl" id="ENSMUST00000116316.10">
    <molecule id="E9PYY5-2"/>
    <property type="protein sequence ID" value="ENSMUSP00000112018.4"/>
    <property type="gene ID" value="ENSMUSG00000035126.21"/>
</dbReference>
<dbReference type="GeneID" id="242584"/>
<dbReference type="KEGG" id="mmu:242584"/>
<dbReference type="UCSC" id="uc029uyj.1">
    <molecule id="E9PYY5-1"/>
    <property type="organism name" value="mouse"/>
</dbReference>
<dbReference type="AGR" id="MGI:2385328"/>
<dbReference type="CTD" id="79819"/>
<dbReference type="MGI" id="MGI:2385328">
    <property type="gene designation" value="Dnai4"/>
</dbReference>
<dbReference type="VEuPathDB" id="HostDB:ENSMUSG00000035126"/>
<dbReference type="eggNOG" id="ENOG502QWGI">
    <property type="taxonomic scope" value="Eukaryota"/>
</dbReference>
<dbReference type="GeneTree" id="ENSGT00940000156209"/>
<dbReference type="HOGENOM" id="CLU_868662_0_0_1"/>
<dbReference type="InParanoid" id="E9PYY5"/>
<dbReference type="OMA" id="VFVWSIK"/>
<dbReference type="PhylomeDB" id="E9PYY5"/>
<dbReference type="TreeFam" id="TF300553"/>
<dbReference type="BioGRID-ORCS" id="242584">
    <property type="hits" value="2 hits in 71 CRISPR screens"/>
</dbReference>
<dbReference type="ChiTaRS" id="Wdr78">
    <property type="organism name" value="mouse"/>
</dbReference>
<dbReference type="PRO" id="PR:E9PYY5"/>
<dbReference type="Proteomes" id="UP000000589">
    <property type="component" value="Chromosome 4"/>
</dbReference>
<dbReference type="RNAct" id="E9PYY5">
    <property type="molecule type" value="protein"/>
</dbReference>
<dbReference type="Bgee" id="ENSMUSG00000035126">
    <property type="expression patterns" value="Expressed in spermatid and 182 other cell types or tissues"/>
</dbReference>
<dbReference type="ExpressionAtlas" id="E9PYY5">
    <property type="expression patterns" value="baseline and differential"/>
</dbReference>
<dbReference type="GO" id="GO:0005858">
    <property type="term" value="C:axonemal dynein complex"/>
    <property type="evidence" value="ECO:0000315"/>
    <property type="project" value="UniProtKB"/>
</dbReference>
<dbReference type="GO" id="GO:0005930">
    <property type="term" value="C:axoneme"/>
    <property type="evidence" value="ECO:0000314"/>
    <property type="project" value="UniProtKB"/>
</dbReference>
<dbReference type="GO" id="GO:0120293">
    <property type="term" value="C:dynein axonemal particle"/>
    <property type="evidence" value="ECO:0000250"/>
    <property type="project" value="UniProtKB"/>
</dbReference>
<dbReference type="GO" id="GO:0031514">
    <property type="term" value="C:motile cilium"/>
    <property type="evidence" value="ECO:0000314"/>
    <property type="project" value="UniProtKB"/>
</dbReference>
<dbReference type="GO" id="GO:0070286">
    <property type="term" value="P:axonemal dynein complex assembly"/>
    <property type="evidence" value="ECO:0000315"/>
    <property type="project" value="UniProtKB"/>
</dbReference>
<dbReference type="GO" id="GO:0003341">
    <property type="term" value="P:cilium movement"/>
    <property type="evidence" value="ECO:0000315"/>
    <property type="project" value="UniProtKB"/>
</dbReference>
<dbReference type="GO" id="GO:0002244">
    <property type="term" value="P:hematopoietic progenitor cell differentiation"/>
    <property type="evidence" value="ECO:0000315"/>
    <property type="project" value="MGI"/>
</dbReference>
<dbReference type="FunFam" id="2.130.10.10:FF:000373">
    <property type="entry name" value="WD repeat domain 78"/>
    <property type="match status" value="1"/>
</dbReference>
<dbReference type="FunFam" id="2.130.10.10:FF:002939">
    <property type="entry name" value="WD repeat-containing protein 78"/>
    <property type="match status" value="1"/>
</dbReference>
<dbReference type="Gene3D" id="2.130.10.10">
    <property type="entry name" value="YVTN repeat-like/Quinoprotein amine dehydrogenase"/>
    <property type="match status" value="2"/>
</dbReference>
<dbReference type="InterPro" id="IPR050687">
    <property type="entry name" value="Dynein_IC"/>
</dbReference>
<dbReference type="InterPro" id="IPR015943">
    <property type="entry name" value="WD40/YVTN_repeat-like_dom_sf"/>
</dbReference>
<dbReference type="InterPro" id="IPR036322">
    <property type="entry name" value="WD40_repeat_dom_sf"/>
</dbReference>
<dbReference type="InterPro" id="IPR001680">
    <property type="entry name" value="WD40_rpt"/>
</dbReference>
<dbReference type="PANTHER" id="PTHR12442:SF12">
    <property type="entry name" value="DYNEIN AXONEMAL INTERMEDIATE CHAIN 4"/>
    <property type="match status" value="1"/>
</dbReference>
<dbReference type="PANTHER" id="PTHR12442">
    <property type="entry name" value="DYNEIN INTERMEDIATE CHAIN"/>
    <property type="match status" value="1"/>
</dbReference>
<dbReference type="Pfam" id="PF00400">
    <property type="entry name" value="WD40"/>
    <property type="match status" value="3"/>
</dbReference>
<dbReference type="SMART" id="SM00320">
    <property type="entry name" value="WD40"/>
    <property type="match status" value="5"/>
</dbReference>
<dbReference type="SUPFAM" id="SSF50978">
    <property type="entry name" value="WD40 repeat-like"/>
    <property type="match status" value="1"/>
</dbReference>
<dbReference type="PROSITE" id="PS50082">
    <property type="entry name" value="WD_REPEATS_2"/>
    <property type="match status" value="2"/>
</dbReference>
<dbReference type="PROSITE" id="PS50294">
    <property type="entry name" value="WD_REPEATS_REGION"/>
    <property type="match status" value="1"/>
</dbReference>
<feature type="chain" id="PRO_0000415828" description="Dynein axonemal intermediate chain 4">
    <location>
        <begin position="1"/>
        <end position="807"/>
    </location>
</feature>
<feature type="repeat" description="WD 1" evidence="2">
    <location>
        <begin position="493"/>
        <end position="533"/>
    </location>
</feature>
<feature type="repeat" description="WD 2" evidence="2">
    <location>
        <begin position="542"/>
        <end position="590"/>
    </location>
</feature>
<feature type="repeat" description="WD 3" evidence="2">
    <location>
        <begin position="617"/>
        <end position="657"/>
    </location>
</feature>
<feature type="repeat" description="WD 4" evidence="2">
    <location>
        <begin position="661"/>
        <end position="701"/>
    </location>
</feature>
<feature type="repeat" description="WD 5" evidence="2">
    <location>
        <begin position="704"/>
        <end position="743"/>
    </location>
</feature>
<feature type="repeat" description="WD 6" evidence="2">
    <location>
        <begin position="749"/>
        <end position="788"/>
    </location>
</feature>
<feature type="region of interest" description="Disordered" evidence="3">
    <location>
        <begin position="1"/>
        <end position="44"/>
    </location>
</feature>
<feature type="region of interest" description="Disordered" evidence="3">
    <location>
        <begin position="300"/>
        <end position="320"/>
    </location>
</feature>
<feature type="compositionally biased region" description="Polar residues" evidence="3">
    <location>
        <begin position="1"/>
        <end position="11"/>
    </location>
</feature>
<feature type="compositionally biased region" description="Polar residues" evidence="3">
    <location>
        <begin position="22"/>
        <end position="31"/>
    </location>
</feature>
<feature type="compositionally biased region" description="Low complexity" evidence="3">
    <location>
        <begin position="32"/>
        <end position="43"/>
    </location>
</feature>
<feature type="compositionally biased region" description="Basic and acidic residues" evidence="3">
    <location>
        <begin position="308"/>
        <end position="317"/>
    </location>
</feature>
<feature type="splice variant" id="VSP_042399" description="In isoform 3 and isoform 4." evidence="5 6">
    <location>
        <begin position="1"/>
        <end position="323"/>
    </location>
</feature>
<feature type="splice variant" id="VSP_042400" description="In isoform 3." evidence="5">
    <location>
        <begin position="458"/>
        <end position="486"/>
    </location>
</feature>
<feature type="splice variant" id="VSP_042401" description="In isoform 2." evidence="5">
    <original>DLMRLKRTTATGGKKGGEKEKK</original>
    <variation>GHEHLSGWYRRRPYSQVFLFIQ</variation>
    <location>
        <begin position="590"/>
        <end position="611"/>
    </location>
</feature>
<feature type="splice variant" id="VSP_042402" description="In isoform 2." evidence="5">
    <location>
        <begin position="612"/>
        <end position="807"/>
    </location>
</feature>
<feature type="splice variant" id="VSP_042403" description="In isoform 3 and isoform 4." evidence="5 6">
    <original>GPVYKVTWNPFCPDVFLSCSADWGVMIWHQDTVKPFLSFYPTTYVVYDVSWSPKSAYIFAAANENRVEIWDLQISTLDPLIVNVANPGIKFTTVLFAKETDCLLVGDSDGQVAVYELRNMPTASDTSRGDVINILLGPKTNHTG</original>
    <variation>FGPSDRECC</variation>
    <location>
        <begin position="664"/>
        <end position="807"/>
    </location>
</feature>
<reference key="1">
    <citation type="journal article" date="2005" name="Science">
        <title>The transcriptional landscape of the mammalian genome.</title>
        <authorList>
            <person name="Carninci P."/>
            <person name="Kasukawa T."/>
            <person name="Katayama S."/>
            <person name="Gough J."/>
            <person name="Frith M.C."/>
            <person name="Maeda N."/>
            <person name="Oyama R."/>
            <person name="Ravasi T."/>
            <person name="Lenhard B."/>
            <person name="Wells C."/>
            <person name="Kodzius R."/>
            <person name="Shimokawa K."/>
            <person name="Bajic V.B."/>
            <person name="Brenner S.E."/>
            <person name="Batalov S."/>
            <person name="Forrest A.R."/>
            <person name="Zavolan M."/>
            <person name="Davis M.J."/>
            <person name="Wilming L.G."/>
            <person name="Aidinis V."/>
            <person name="Allen J.E."/>
            <person name="Ambesi-Impiombato A."/>
            <person name="Apweiler R."/>
            <person name="Aturaliya R.N."/>
            <person name="Bailey T.L."/>
            <person name="Bansal M."/>
            <person name="Baxter L."/>
            <person name="Beisel K.W."/>
            <person name="Bersano T."/>
            <person name="Bono H."/>
            <person name="Chalk A.M."/>
            <person name="Chiu K.P."/>
            <person name="Choudhary V."/>
            <person name="Christoffels A."/>
            <person name="Clutterbuck D.R."/>
            <person name="Crowe M.L."/>
            <person name="Dalla E."/>
            <person name="Dalrymple B.P."/>
            <person name="de Bono B."/>
            <person name="Della Gatta G."/>
            <person name="di Bernardo D."/>
            <person name="Down T."/>
            <person name="Engstrom P."/>
            <person name="Fagiolini M."/>
            <person name="Faulkner G."/>
            <person name="Fletcher C.F."/>
            <person name="Fukushima T."/>
            <person name="Furuno M."/>
            <person name="Futaki S."/>
            <person name="Gariboldi M."/>
            <person name="Georgii-Hemming P."/>
            <person name="Gingeras T.R."/>
            <person name="Gojobori T."/>
            <person name="Green R.E."/>
            <person name="Gustincich S."/>
            <person name="Harbers M."/>
            <person name="Hayashi Y."/>
            <person name="Hensch T.K."/>
            <person name="Hirokawa N."/>
            <person name="Hill D."/>
            <person name="Huminiecki L."/>
            <person name="Iacono M."/>
            <person name="Ikeo K."/>
            <person name="Iwama A."/>
            <person name="Ishikawa T."/>
            <person name="Jakt M."/>
            <person name="Kanapin A."/>
            <person name="Katoh M."/>
            <person name="Kawasawa Y."/>
            <person name="Kelso J."/>
            <person name="Kitamura H."/>
            <person name="Kitano H."/>
            <person name="Kollias G."/>
            <person name="Krishnan S.P."/>
            <person name="Kruger A."/>
            <person name="Kummerfeld S.K."/>
            <person name="Kurochkin I.V."/>
            <person name="Lareau L.F."/>
            <person name="Lazarevic D."/>
            <person name="Lipovich L."/>
            <person name="Liu J."/>
            <person name="Liuni S."/>
            <person name="McWilliam S."/>
            <person name="Madan Babu M."/>
            <person name="Madera M."/>
            <person name="Marchionni L."/>
            <person name="Matsuda H."/>
            <person name="Matsuzawa S."/>
            <person name="Miki H."/>
            <person name="Mignone F."/>
            <person name="Miyake S."/>
            <person name="Morris K."/>
            <person name="Mottagui-Tabar S."/>
            <person name="Mulder N."/>
            <person name="Nakano N."/>
            <person name="Nakauchi H."/>
            <person name="Ng P."/>
            <person name="Nilsson R."/>
            <person name="Nishiguchi S."/>
            <person name="Nishikawa S."/>
            <person name="Nori F."/>
            <person name="Ohara O."/>
            <person name="Okazaki Y."/>
            <person name="Orlando V."/>
            <person name="Pang K.C."/>
            <person name="Pavan W.J."/>
            <person name="Pavesi G."/>
            <person name="Pesole G."/>
            <person name="Petrovsky N."/>
            <person name="Piazza S."/>
            <person name="Reed J."/>
            <person name="Reid J.F."/>
            <person name="Ring B.Z."/>
            <person name="Ringwald M."/>
            <person name="Rost B."/>
            <person name="Ruan Y."/>
            <person name="Salzberg S.L."/>
            <person name="Sandelin A."/>
            <person name="Schneider C."/>
            <person name="Schoenbach C."/>
            <person name="Sekiguchi K."/>
            <person name="Semple C.A."/>
            <person name="Seno S."/>
            <person name="Sessa L."/>
            <person name="Sheng Y."/>
            <person name="Shibata Y."/>
            <person name="Shimada H."/>
            <person name="Shimada K."/>
            <person name="Silva D."/>
            <person name="Sinclair B."/>
            <person name="Sperling S."/>
            <person name="Stupka E."/>
            <person name="Sugiura K."/>
            <person name="Sultana R."/>
            <person name="Takenaka Y."/>
            <person name="Taki K."/>
            <person name="Tammoja K."/>
            <person name="Tan S.L."/>
            <person name="Tang S."/>
            <person name="Taylor M.S."/>
            <person name="Tegner J."/>
            <person name="Teichmann S.A."/>
            <person name="Ueda H.R."/>
            <person name="van Nimwegen E."/>
            <person name="Verardo R."/>
            <person name="Wei C.L."/>
            <person name="Yagi K."/>
            <person name="Yamanishi H."/>
            <person name="Zabarovsky E."/>
            <person name="Zhu S."/>
            <person name="Zimmer A."/>
            <person name="Hide W."/>
            <person name="Bult C."/>
            <person name="Grimmond S.M."/>
            <person name="Teasdale R.D."/>
            <person name="Liu E.T."/>
            <person name="Brusic V."/>
            <person name="Quackenbush J."/>
            <person name="Wahlestedt C."/>
            <person name="Mattick J.S."/>
            <person name="Hume D.A."/>
            <person name="Kai C."/>
            <person name="Sasaki D."/>
            <person name="Tomaru Y."/>
            <person name="Fukuda S."/>
            <person name="Kanamori-Katayama M."/>
            <person name="Suzuki M."/>
            <person name="Aoki J."/>
            <person name="Arakawa T."/>
            <person name="Iida J."/>
            <person name="Imamura K."/>
            <person name="Itoh M."/>
            <person name="Kato T."/>
            <person name="Kawaji H."/>
            <person name="Kawagashira N."/>
            <person name="Kawashima T."/>
            <person name="Kojima M."/>
            <person name="Kondo S."/>
            <person name="Konno H."/>
            <person name="Nakano K."/>
            <person name="Ninomiya N."/>
            <person name="Nishio T."/>
            <person name="Okada M."/>
            <person name="Plessy C."/>
            <person name="Shibata K."/>
            <person name="Shiraki T."/>
            <person name="Suzuki S."/>
            <person name="Tagami M."/>
            <person name="Waki K."/>
            <person name="Watahiki A."/>
            <person name="Okamura-Oho Y."/>
            <person name="Suzuki H."/>
            <person name="Kawai J."/>
            <person name="Hayashizaki Y."/>
        </authorList>
    </citation>
    <scope>NUCLEOTIDE SEQUENCE [LARGE SCALE MRNA] (ISOFORM 4)</scope>
    <source>
        <strain>C57BL/6J</strain>
        <tissue>Thymus</tissue>
    </source>
</reference>
<reference key="2">
    <citation type="journal article" date="2009" name="PLoS Biol.">
        <title>Lineage-specific biology revealed by a finished genome assembly of the mouse.</title>
        <authorList>
            <person name="Church D.M."/>
            <person name="Goodstadt L."/>
            <person name="Hillier L.W."/>
            <person name="Zody M.C."/>
            <person name="Goldstein S."/>
            <person name="She X."/>
            <person name="Bult C.J."/>
            <person name="Agarwala R."/>
            <person name="Cherry J.L."/>
            <person name="DiCuccio M."/>
            <person name="Hlavina W."/>
            <person name="Kapustin Y."/>
            <person name="Meric P."/>
            <person name="Maglott D."/>
            <person name="Birtle Z."/>
            <person name="Marques A.C."/>
            <person name="Graves T."/>
            <person name="Zhou S."/>
            <person name="Teague B."/>
            <person name="Potamousis K."/>
            <person name="Churas C."/>
            <person name="Place M."/>
            <person name="Herschleb J."/>
            <person name="Runnheim R."/>
            <person name="Forrest D."/>
            <person name="Amos-Landgraf J."/>
            <person name="Schwartz D.C."/>
            <person name="Cheng Z."/>
            <person name="Lindblad-Toh K."/>
            <person name="Eichler E.E."/>
            <person name="Ponting C.P."/>
        </authorList>
    </citation>
    <scope>NUCLEOTIDE SEQUENCE [LARGE SCALE GENOMIC DNA]</scope>
    <source>
        <strain>C57BL/6J</strain>
    </source>
</reference>
<reference key="3">
    <citation type="journal article" date="2004" name="Genome Res.">
        <title>The status, quality, and expansion of the NIH full-length cDNA project: the Mammalian Gene Collection (MGC).</title>
        <authorList>
            <consortium name="The MGC Project Team"/>
        </authorList>
    </citation>
    <scope>NUCLEOTIDE SEQUENCE [LARGE SCALE MRNA] (ISOFORMS 2 AND 3)</scope>
    <source>
        <strain>FVB/N</strain>
        <tissue>Eye</tissue>
        <tissue>Salivary gland</tissue>
    </source>
</reference>
<reference key="4">
    <citation type="journal article" date="2010" name="Cell">
        <title>A tissue-specific atlas of mouse protein phosphorylation and expression.</title>
        <authorList>
            <person name="Huttlin E.L."/>
            <person name="Jedrychowski M.P."/>
            <person name="Elias J.E."/>
            <person name="Goswami T."/>
            <person name="Rad R."/>
            <person name="Beausoleil S.A."/>
            <person name="Villen J."/>
            <person name="Haas W."/>
            <person name="Sowa M.E."/>
            <person name="Gygi S.P."/>
        </authorList>
    </citation>
    <scope>IDENTIFICATION BY MASS SPECTROMETRY [LARGE SCALE ANALYSIS]</scope>
    <source>
        <tissue>Testis</tissue>
    </source>
</reference>
<reference key="5">
    <citation type="journal article" date="2019" name="J. Mol. Cell Biol.">
        <title>Vertebrate Dynein-f depends on Wdr78 for axonemal localization and is essential for ciliary beat.</title>
        <authorList>
            <person name="Zhang Y."/>
            <person name="Chen Y."/>
            <person name="Zheng J."/>
            <person name="Wang J."/>
            <person name="Duan S."/>
            <person name="Zhang W."/>
            <person name="Yan X."/>
            <person name="Zhu X."/>
        </authorList>
    </citation>
    <scope>FUNCTION</scope>
    <scope>SUBUNIT</scope>
    <scope>INTERACTION WITH DYNLT1</scope>
    <scope>TISSUE SPECIFICITY</scope>
</reference>
<protein>
    <recommendedName>
        <fullName evidence="7">Dynein axonemal intermediate chain 4</fullName>
    </recommendedName>
    <alternativeName>
        <fullName>WD repeat-containing protein 78</fullName>
    </alternativeName>
</protein>
<keyword id="KW-0025">Alternative splicing</keyword>
<keyword id="KW-0966">Cell projection</keyword>
<keyword id="KW-0969">Cilium</keyword>
<keyword id="KW-0963">Cytoplasm</keyword>
<keyword id="KW-0206">Cytoskeleton</keyword>
<keyword id="KW-0282">Flagellum</keyword>
<keyword id="KW-1185">Reference proteome</keyword>
<keyword id="KW-0677">Repeat</keyword>
<keyword id="KW-0853">WD repeat</keyword>
<accession>E9PYY5</accession>
<accession>Q8C0I9</accession>
<accession>Q8K042</accession>
<accession>Q8K111</accession>
<name>DNAI4_MOUSE</name>
<proteinExistence type="evidence at protein level"/>
<gene>
    <name type="primary">Dnai4</name>
    <name evidence="8" type="synonym">Wdr78</name>
</gene>
<organism>
    <name type="scientific">Mus musculus</name>
    <name type="common">Mouse</name>
    <dbReference type="NCBI Taxonomy" id="10090"/>
    <lineage>
        <taxon>Eukaryota</taxon>
        <taxon>Metazoa</taxon>
        <taxon>Chordata</taxon>
        <taxon>Craniata</taxon>
        <taxon>Vertebrata</taxon>
        <taxon>Euteleostomi</taxon>
        <taxon>Mammalia</taxon>
        <taxon>Eutheria</taxon>
        <taxon>Euarchontoglires</taxon>
        <taxon>Glires</taxon>
        <taxon>Rodentia</taxon>
        <taxon>Myomorpha</taxon>
        <taxon>Muroidea</taxon>
        <taxon>Muridae</taxon>
        <taxon>Murinae</taxon>
        <taxon>Mus</taxon>
        <taxon>Mus</taxon>
    </lineage>
</organism>
<sequence>MHSSPTSTRKQASFAASASAQPRKSISFINPSKSSAGKGYAASNPNKLAVSRTMGFLTDMKPAEKLNVPSAKTVQVLDSKGVDVTPRPLYHPDPHAASAKPNKLLTSQEGSLGSDYISSYSLYQNTLNPSMLGQYTRSVLGSSSVSKSSISTTESMSEDLEDSSYKRDRLASFTDVRVLRSTAEAAISKEELEKTIEIILTETETLRFFDLPTVMFSTESEEAEKIIEKNKKYETLCRNRLGNDLYVERMMQTFNGAPKNKEVQCEKIILEEKGVVATTWDLYDSYNIPETLLAAKRSGYSSKGSLPAKDRDPKIQDSESSSLMDIENVILAKVQEDEEDNSEAILKSDKLHQDLFYMERVLMENVFQPKLAAYRQLPVYKEHEPEEPEETLQVENLKVAEDEPKKEDEEEVEMELELEIATEQSTIPANLERLWSFSCDLTKGLNVSSLSWNKANPDLLAVGYGNFGFREQKKGMACCWSIKNPMWPERIYQSSYGVTSVDFSNSSPNLLAVGYHNGTVAIYNVQSSHNIPVLDSSESPQKHLGPVWQVQWIEQDRGTTGDDKREILVSISADGRISKWIIRKGLDCHDLMRLKRTTATGGKKGGEKEKKGEALISRQAPGMCFAFHPKDTNIYLAGTEEGLIHKCSCSYNEQYLETYRGHKGPVYKVTWNPFCPDVFLSCSADWGVMIWHQDTVKPFLSFYPTTYVVYDVSWSPKSAYIFAAANENRVEIWDLQISTLDPLIVNVANPGIKFTTVLFAKETDCLLVGDSDGQVAVYELRNMPTASDTSRGDVINILLGPKTNHTG</sequence>
<comment type="function">
    <text evidence="4">Plays a critical role in the assembly of axonemal dynein complex, thereby playing a role in ciliary motility.</text>
</comment>
<comment type="subunit">
    <text evidence="4">Part of the multisubunit axonemal dynein complex formed at least of two heavy chains and a number of intermediate and light chains. Associated with axonemal dynein subunits such as, DNAH2, DNAI3, and DYNLT1 (PubMed:30060180). Interacts with DYNLT1 (PubMed:30060180).</text>
</comment>
<comment type="subcellular location">
    <subcellularLocation>
        <location evidence="4">Cytoplasm</location>
        <location evidence="4">Cytoskeleton</location>
        <location evidence="4">Flagellum axoneme</location>
    </subcellularLocation>
    <subcellularLocation>
        <location evidence="4">Cytoplasm</location>
        <location evidence="4">Cytoskeleton</location>
        <location evidence="4">Cilium axoneme</location>
    </subcellularLocation>
    <subcellularLocation>
        <location evidence="1">Dynein axonemal particle</location>
    </subcellularLocation>
</comment>
<comment type="alternative products">
    <event type="alternative splicing"/>
    <isoform>
        <id>E9PYY5-1</id>
        <name>1</name>
        <sequence type="displayed"/>
    </isoform>
    <isoform>
        <id>E9PYY5-2</id>
        <name>2</name>
        <sequence type="described" ref="VSP_042401 VSP_042402"/>
    </isoform>
    <isoform>
        <id>E9PYY5-3</id>
        <name>3</name>
        <sequence type="described" ref="VSP_042399 VSP_042400 VSP_042403"/>
    </isoform>
    <isoform>
        <id>E9PYY5-4</id>
        <name>4</name>
        <sequence type="described" ref="VSP_042399 VSP_042403"/>
    </isoform>
</comment>
<comment type="tissue specificity">
    <text evidence="4">Highly expressed in tissues containing motile cilia, including the trachea, lung, oviduct, and testis.</text>
</comment>